<feature type="chain" id="PRO_0000105996" description="Nucleoprotein">
    <location>
        <begin position="1"/>
        <end position="448"/>
    </location>
</feature>
<feature type="domain" description="CoV N NTD" evidence="3">
    <location>
        <begin position="61"/>
        <end position="190"/>
    </location>
</feature>
<feature type="domain" description="CoV N CTD" evidence="4">
    <location>
        <begin position="259"/>
        <end position="384"/>
    </location>
</feature>
<feature type="region of interest" description="Disordered" evidence="5">
    <location>
        <begin position="1"/>
        <end position="55"/>
    </location>
</feature>
<feature type="region of interest" description="RNA-binding" evidence="2">
    <location>
        <begin position="52"/>
        <end position="194"/>
    </location>
</feature>
<feature type="region of interest" description="Disordered" evidence="5">
    <location>
        <begin position="157"/>
        <end position="231"/>
    </location>
</feature>
<feature type="region of interest" description="Dimerization" evidence="2">
    <location>
        <begin position="266"/>
        <end position="384"/>
    </location>
</feature>
<feature type="region of interest" description="Disordered" evidence="5">
    <location>
        <begin position="266"/>
        <end position="297"/>
    </location>
</feature>
<feature type="region of interest" description="Disordered" evidence="5">
    <location>
        <begin position="385"/>
        <end position="448"/>
    </location>
</feature>
<feature type="compositionally biased region" description="Polar residues" evidence="5">
    <location>
        <begin position="1"/>
        <end position="20"/>
    </location>
</feature>
<feature type="compositionally biased region" description="Polar residues" evidence="5">
    <location>
        <begin position="29"/>
        <end position="38"/>
    </location>
</feature>
<feature type="compositionally biased region" description="Polar residues" evidence="5">
    <location>
        <begin position="45"/>
        <end position="55"/>
    </location>
</feature>
<feature type="compositionally biased region" description="Low complexity" evidence="5">
    <location>
        <begin position="193"/>
        <end position="223"/>
    </location>
</feature>
<feature type="compositionally biased region" description="Basic residues" evidence="5">
    <location>
        <begin position="266"/>
        <end position="276"/>
    </location>
</feature>
<feature type="compositionally biased region" description="Polar residues" evidence="5">
    <location>
        <begin position="399"/>
        <end position="409"/>
    </location>
</feature>
<feature type="compositionally biased region" description="Basic and acidic residues" evidence="5">
    <location>
        <begin position="422"/>
        <end position="439"/>
    </location>
</feature>
<feature type="binding site" evidence="1">
    <location>
        <position position="106"/>
    </location>
    <ligand>
        <name>RNA</name>
        <dbReference type="ChEBI" id="CHEBI:33697"/>
    </ligand>
</feature>
<feature type="binding site" evidence="1">
    <location>
        <position position="122"/>
    </location>
    <ligand>
        <name>RNA</name>
        <dbReference type="ChEBI" id="CHEBI:33697"/>
    </ligand>
</feature>
<feature type="binding site" evidence="1">
    <location>
        <position position="164"/>
    </location>
    <ligand>
        <name>RNA</name>
        <dbReference type="ChEBI" id="CHEBI:33697"/>
    </ligand>
</feature>
<feature type="modified residue" description="Phosphoserine; by host" evidence="2">
    <location>
        <position position="167"/>
    </location>
</feature>
<feature type="modified residue" description="Phosphothreonine; by host" evidence="2">
    <location>
        <position position="174"/>
    </location>
</feature>
<feature type="modified residue" description="Phosphoserine; by host" evidence="2">
    <location>
        <position position="191"/>
    </location>
</feature>
<feature type="modified residue" description="Phosphoserine; by host" evidence="2">
    <location>
        <position position="390"/>
    </location>
</feature>
<feature type="modified residue" description="Phosphoserine; by host" evidence="2">
    <location>
        <position position="423"/>
    </location>
</feature>
<feature type="modified residue" description="Phosphothreonine; by host" evidence="2">
    <location>
        <position position="427"/>
    </location>
</feature>
<organism>
    <name type="scientific">Bovine coronavirus (strain Quebec)</name>
    <name type="common">BCoV</name>
    <name type="synonym">BCV</name>
    <dbReference type="NCBI Taxonomy" id="11133"/>
    <lineage>
        <taxon>Viruses</taxon>
        <taxon>Riboviria</taxon>
        <taxon>Orthornavirae</taxon>
        <taxon>Pisuviricota</taxon>
        <taxon>Pisoniviricetes</taxon>
        <taxon>Nidovirales</taxon>
        <taxon>Cornidovirineae</taxon>
        <taxon>Coronaviridae</taxon>
        <taxon>Orthocoronavirinae</taxon>
        <taxon>Betacoronavirus</taxon>
        <taxon>Embecovirus</taxon>
        <taxon>Betacoronavirus 1</taxon>
    </lineage>
</organism>
<comment type="function">
    <text evidence="2">Packages the positive strand viral genome RNA into a helical ribonucleocapsid (RNP) and plays a fundamental role during virion assembly through its interactions with the viral genome and membrane protein M. Plays an important role in enhancing the efficiency of subgenomic viral RNA transcription as well as viral replication.</text>
</comment>
<comment type="subunit">
    <text evidence="2">Homooligomer. Both monomeric and oligomeric forms interact with RNA. Interacts with protein M. Interacts with NSP3; this interaction serves to tether the genome to the newly translated replicase-transcriptase complex at a very early stage of infection.</text>
</comment>
<comment type="subcellular location">
    <subcellularLocation>
        <location evidence="2">Virion</location>
    </subcellularLocation>
    <subcellularLocation>
        <location evidence="2">Host endoplasmic reticulum-Golgi intermediate compartment</location>
    </subcellularLocation>
    <subcellularLocation>
        <location evidence="2">Host Golgi apparatus</location>
    </subcellularLocation>
    <text evidence="2">Located inside the virion, complexed with the viral RNA. Probably associates with ER-derived membranes where it participates in viral RNA synthesis and virus budding.</text>
</comment>
<comment type="PTM">
    <text evidence="2">ADP-ribosylated. The ADP-ribosylation is retained in the virion during infection.</text>
</comment>
<comment type="PTM">
    <text evidence="2">Phosphorylated on serine and threonine residues.</text>
</comment>
<comment type="similarity">
    <text evidence="2">Belongs to the betacoronavirus nucleocapsid protein family.</text>
</comment>
<keyword id="KW-0013">ADP-ribosylation</keyword>
<keyword id="KW-1040">Host Golgi apparatus</keyword>
<keyword id="KW-0597">Phosphoprotein</keyword>
<keyword id="KW-0687">Ribonucleoprotein</keyword>
<keyword id="KW-0694">RNA-binding</keyword>
<keyword id="KW-0804">Transcription</keyword>
<keyword id="KW-0805">Transcription regulation</keyword>
<keyword id="KW-0543">Viral nucleoprotein</keyword>
<keyword id="KW-0946">Virion</keyword>
<accession>P59712</accession>
<dbReference type="EMBL" id="AF220295">
    <property type="protein sequence ID" value="AAL40406.1"/>
    <property type="molecule type" value="Genomic_RNA"/>
</dbReference>
<dbReference type="SMR" id="P59712"/>
<dbReference type="Proteomes" id="UP000008572">
    <property type="component" value="Genome"/>
</dbReference>
<dbReference type="GO" id="GO:0044172">
    <property type="term" value="C:host cell endoplasmic reticulum-Golgi intermediate compartment"/>
    <property type="evidence" value="ECO:0007669"/>
    <property type="project" value="UniProtKB-SubCell"/>
</dbReference>
<dbReference type="GO" id="GO:0044177">
    <property type="term" value="C:host cell Golgi apparatus"/>
    <property type="evidence" value="ECO:0007669"/>
    <property type="project" value="UniProtKB-SubCell"/>
</dbReference>
<dbReference type="GO" id="GO:1990904">
    <property type="term" value="C:ribonucleoprotein complex"/>
    <property type="evidence" value="ECO:0007669"/>
    <property type="project" value="UniProtKB-KW"/>
</dbReference>
<dbReference type="GO" id="GO:0019013">
    <property type="term" value="C:viral nucleocapsid"/>
    <property type="evidence" value="ECO:0007669"/>
    <property type="project" value="UniProtKB-UniRule"/>
</dbReference>
<dbReference type="GO" id="GO:0003723">
    <property type="term" value="F:RNA binding"/>
    <property type="evidence" value="ECO:0007669"/>
    <property type="project" value="UniProtKB-UniRule"/>
</dbReference>
<dbReference type="CDD" id="cd21595">
    <property type="entry name" value="CoV_N-CTD"/>
    <property type="match status" value="1"/>
</dbReference>
<dbReference type="CDD" id="cd21554">
    <property type="entry name" value="CoV_N-NTD"/>
    <property type="match status" value="1"/>
</dbReference>
<dbReference type="HAMAP" id="MF_04096">
    <property type="entry name" value="BETA_CORONA_NCAP"/>
    <property type="match status" value="1"/>
</dbReference>
<dbReference type="InterPro" id="IPR044344">
    <property type="entry name" value="N_prot_C_CoV"/>
</dbReference>
<dbReference type="InterPro" id="IPR044345">
    <property type="entry name" value="N_prot_N_CoV"/>
</dbReference>
<dbReference type="InterPro" id="IPR043505">
    <property type="entry name" value="NCAP_bCoV"/>
</dbReference>
<dbReference type="InterPro" id="IPR001218">
    <property type="entry name" value="Nucleocap_CoV"/>
</dbReference>
<dbReference type="InterPro" id="IPR037179">
    <property type="entry name" value="Nucleocapsid_C"/>
</dbReference>
<dbReference type="InterPro" id="IPR037195">
    <property type="entry name" value="Nucleocapsid_N"/>
</dbReference>
<dbReference type="Pfam" id="PF00937">
    <property type="entry name" value="CoV_nucleocap"/>
    <property type="match status" value="1"/>
</dbReference>
<dbReference type="PIRSF" id="PIRSF003888">
    <property type="entry name" value="Corona_nucleocap"/>
    <property type="match status" value="1"/>
</dbReference>
<dbReference type="SUPFAM" id="SSF110304">
    <property type="entry name" value="Coronavirus RNA-binding domain"/>
    <property type="match status" value="1"/>
</dbReference>
<dbReference type="SUPFAM" id="SSF103068">
    <property type="entry name" value="Nucleocapsid protein dimerization domain"/>
    <property type="match status" value="1"/>
</dbReference>
<dbReference type="PROSITE" id="PS51929">
    <property type="entry name" value="COV_N_CTD"/>
    <property type="match status" value="1"/>
</dbReference>
<dbReference type="PROSITE" id="PS51928">
    <property type="entry name" value="COV_N_NTD"/>
    <property type="match status" value="1"/>
</dbReference>
<sequence>MSFTPGKQSSSRASFGNRSGNGILKWADQSDQSRNVQTRGRRAQPKQTATSQLPSGGNVVPYYSWFSGITQFQKGKEFEFAEGQGVPIAPGVPATEAKGYWYRHNRRSFKTADGNQRQLLPRWYFYYLGTGPHAKDQYGTDIDGVFWVASNQADVNTPADILDRDPSSDEAIPTRFPPGTVLPQGYYIEGSGRSAPNSRSTSRASSRASSAGSRSRANSGNRTPTSGVTPDMADQIASLVLAKLGKDATKPQQVTKQTAKEIRQKILNKPRQKRSPNKQCTVQQCFGKRGPNQNFGGGEMLKLGTSDPQFPILAELAPTAGAFFFGSRLELAKVQNLSGNLDEPQKDVYELRYNGAIRFDSTLSGFETIMKVLNENLNAYQQQDGMMNMSPKPQRQRGQKNGQGENDNISVAAPKSRVQQNKSRELTAEDISLLKKMDEPYTEDTSEI</sequence>
<reference key="1">
    <citation type="journal article" date="2001" name="Adv. Exp. Med. Biol.">
        <title>Full-length genomic sequence of bovine coronavirus (31 kb). Completion of the open reading frame 1a/1b sequences.</title>
        <authorList>
            <person name="Yoo D."/>
            <person name="Pei Y."/>
        </authorList>
    </citation>
    <scope>NUCLEOTIDE SEQUENCE [GENOMIC RNA]</scope>
</reference>
<evidence type="ECO:0000250" key="1">
    <source>
        <dbReference type="UniProtKB" id="P0DTC9"/>
    </source>
</evidence>
<evidence type="ECO:0000255" key="2">
    <source>
        <dbReference type="HAMAP-Rule" id="MF_04096"/>
    </source>
</evidence>
<evidence type="ECO:0000255" key="3">
    <source>
        <dbReference type="PROSITE-ProRule" id="PRU01276"/>
    </source>
</evidence>
<evidence type="ECO:0000255" key="4">
    <source>
        <dbReference type="PROSITE-ProRule" id="PRU01277"/>
    </source>
</evidence>
<evidence type="ECO:0000256" key="5">
    <source>
        <dbReference type="SAM" id="MobiDB-lite"/>
    </source>
</evidence>
<gene>
    <name evidence="2" type="primary">N</name>
    <name type="ORF">7a</name>
</gene>
<protein>
    <recommendedName>
        <fullName evidence="2">Nucleoprotein</fullName>
    </recommendedName>
    <alternativeName>
        <fullName evidence="2">Nucleocapsid protein</fullName>
        <shortName evidence="2">NC</shortName>
        <shortName evidence="2">Protein N</shortName>
    </alternativeName>
</protein>
<proteinExistence type="inferred from homology"/>
<organismHost>
    <name type="scientific">Bos taurus</name>
    <name type="common">Bovine</name>
    <dbReference type="NCBI Taxonomy" id="9913"/>
</organismHost>
<name>NCAP_CVBQ</name>